<dbReference type="EC" id="2.6.1.9" evidence="1"/>
<dbReference type="EMBL" id="AL596170">
    <property type="protein sequence ID" value="CAC97269.1"/>
    <property type="molecule type" value="Genomic_DNA"/>
</dbReference>
<dbReference type="PIR" id="AE1687">
    <property type="entry name" value="AE1687"/>
</dbReference>
<dbReference type="RefSeq" id="WP_010991721.1">
    <property type="nucleotide sequence ID" value="NC_003212.1"/>
</dbReference>
<dbReference type="PDB" id="3FFH">
    <property type="method" value="X-ray"/>
    <property type="resolution" value="2.31 A"/>
    <property type="chains" value="A/B=1-360"/>
</dbReference>
<dbReference type="PDBsum" id="3FFH"/>
<dbReference type="SMR" id="Q92A83"/>
<dbReference type="STRING" id="272626.gene:17566397"/>
<dbReference type="GeneID" id="93235378"/>
<dbReference type="KEGG" id="lin:hisC"/>
<dbReference type="eggNOG" id="COG0079">
    <property type="taxonomic scope" value="Bacteria"/>
</dbReference>
<dbReference type="HOGENOM" id="CLU_017584_3_3_9"/>
<dbReference type="OrthoDB" id="9813612at2"/>
<dbReference type="UniPathway" id="UPA00031">
    <property type="reaction ID" value="UER00012"/>
</dbReference>
<dbReference type="EvolutionaryTrace" id="Q92A83"/>
<dbReference type="Proteomes" id="UP000002513">
    <property type="component" value="Chromosome"/>
</dbReference>
<dbReference type="GO" id="GO:0004400">
    <property type="term" value="F:histidinol-phosphate transaminase activity"/>
    <property type="evidence" value="ECO:0007669"/>
    <property type="project" value="UniProtKB-UniRule"/>
</dbReference>
<dbReference type="GO" id="GO:0030170">
    <property type="term" value="F:pyridoxal phosphate binding"/>
    <property type="evidence" value="ECO:0007669"/>
    <property type="project" value="InterPro"/>
</dbReference>
<dbReference type="GO" id="GO:0000105">
    <property type="term" value="P:L-histidine biosynthetic process"/>
    <property type="evidence" value="ECO:0007669"/>
    <property type="project" value="UniProtKB-UniRule"/>
</dbReference>
<dbReference type="CDD" id="cd00609">
    <property type="entry name" value="AAT_like"/>
    <property type="match status" value="1"/>
</dbReference>
<dbReference type="Gene3D" id="3.90.1150.10">
    <property type="entry name" value="Aspartate Aminotransferase, domain 1"/>
    <property type="match status" value="1"/>
</dbReference>
<dbReference type="Gene3D" id="3.40.640.10">
    <property type="entry name" value="Type I PLP-dependent aspartate aminotransferase-like (Major domain)"/>
    <property type="match status" value="1"/>
</dbReference>
<dbReference type="HAMAP" id="MF_01023">
    <property type="entry name" value="HisC_aminotrans_2"/>
    <property type="match status" value="1"/>
</dbReference>
<dbReference type="InterPro" id="IPR004839">
    <property type="entry name" value="Aminotransferase_I/II_large"/>
</dbReference>
<dbReference type="InterPro" id="IPR005861">
    <property type="entry name" value="HisP_aminotrans"/>
</dbReference>
<dbReference type="InterPro" id="IPR050106">
    <property type="entry name" value="HistidinolP_aminotransfase"/>
</dbReference>
<dbReference type="InterPro" id="IPR015424">
    <property type="entry name" value="PyrdxlP-dep_Trfase"/>
</dbReference>
<dbReference type="InterPro" id="IPR015421">
    <property type="entry name" value="PyrdxlP-dep_Trfase_major"/>
</dbReference>
<dbReference type="InterPro" id="IPR015422">
    <property type="entry name" value="PyrdxlP-dep_Trfase_small"/>
</dbReference>
<dbReference type="NCBIfam" id="TIGR01141">
    <property type="entry name" value="hisC"/>
    <property type="match status" value="1"/>
</dbReference>
<dbReference type="PANTHER" id="PTHR43643:SF3">
    <property type="entry name" value="HISTIDINOL-PHOSPHATE AMINOTRANSFERASE"/>
    <property type="match status" value="1"/>
</dbReference>
<dbReference type="PANTHER" id="PTHR43643">
    <property type="entry name" value="HISTIDINOL-PHOSPHATE AMINOTRANSFERASE 2"/>
    <property type="match status" value="1"/>
</dbReference>
<dbReference type="Pfam" id="PF00155">
    <property type="entry name" value="Aminotran_1_2"/>
    <property type="match status" value="1"/>
</dbReference>
<dbReference type="SUPFAM" id="SSF53383">
    <property type="entry name" value="PLP-dependent transferases"/>
    <property type="match status" value="1"/>
</dbReference>
<reference key="1">
    <citation type="journal article" date="2001" name="Science">
        <title>Comparative genomics of Listeria species.</title>
        <authorList>
            <person name="Glaser P."/>
            <person name="Frangeul L."/>
            <person name="Buchrieser C."/>
            <person name="Rusniok C."/>
            <person name="Amend A."/>
            <person name="Baquero F."/>
            <person name="Berche P."/>
            <person name="Bloecker H."/>
            <person name="Brandt P."/>
            <person name="Chakraborty T."/>
            <person name="Charbit A."/>
            <person name="Chetouani F."/>
            <person name="Couve E."/>
            <person name="de Daruvar A."/>
            <person name="Dehoux P."/>
            <person name="Domann E."/>
            <person name="Dominguez-Bernal G."/>
            <person name="Duchaud E."/>
            <person name="Durant L."/>
            <person name="Dussurget O."/>
            <person name="Entian K.-D."/>
            <person name="Fsihi H."/>
            <person name="Garcia-del Portillo F."/>
            <person name="Garrido P."/>
            <person name="Gautier L."/>
            <person name="Goebel W."/>
            <person name="Gomez-Lopez N."/>
            <person name="Hain T."/>
            <person name="Hauf J."/>
            <person name="Jackson D."/>
            <person name="Jones L.-M."/>
            <person name="Kaerst U."/>
            <person name="Kreft J."/>
            <person name="Kuhn M."/>
            <person name="Kunst F."/>
            <person name="Kurapkat G."/>
            <person name="Madueno E."/>
            <person name="Maitournam A."/>
            <person name="Mata Vicente J."/>
            <person name="Ng E."/>
            <person name="Nedjari H."/>
            <person name="Nordsiek G."/>
            <person name="Novella S."/>
            <person name="de Pablos B."/>
            <person name="Perez-Diaz J.-C."/>
            <person name="Purcell R."/>
            <person name="Remmel B."/>
            <person name="Rose M."/>
            <person name="Schlueter T."/>
            <person name="Simoes N."/>
            <person name="Tierrez A."/>
            <person name="Vazquez-Boland J.-A."/>
            <person name="Voss H."/>
            <person name="Wehland J."/>
            <person name="Cossart P."/>
        </authorList>
    </citation>
    <scope>NUCLEOTIDE SEQUENCE [LARGE SCALE GENOMIC DNA]</scope>
    <source>
        <strain>ATCC BAA-680 / CLIP 11262</strain>
    </source>
</reference>
<name>HIS8_LISIN</name>
<evidence type="ECO:0000255" key="1">
    <source>
        <dbReference type="HAMAP-Rule" id="MF_01023"/>
    </source>
</evidence>
<evidence type="ECO:0007829" key="2">
    <source>
        <dbReference type="PDB" id="3FFH"/>
    </source>
</evidence>
<feature type="chain" id="PRO_0000153385" description="Histidinol-phosphate aminotransferase">
    <location>
        <begin position="1"/>
        <end position="360"/>
    </location>
</feature>
<feature type="modified residue" description="N6-(pyridoxal phosphate)lysine" evidence="1">
    <location>
        <position position="222"/>
    </location>
</feature>
<feature type="helix" evidence="2">
    <location>
        <begin position="5"/>
        <end position="7"/>
    </location>
</feature>
<feature type="helix" evidence="2">
    <location>
        <begin position="18"/>
        <end position="24"/>
    </location>
</feature>
<feature type="turn" evidence="2">
    <location>
        <begin position="25"/>
        <end position="27"/>
    </location>
</feature>
<feature type="helix" evidence="2">
    <location>
        <begin position="45"/>
        <end position="52"/>
    </location>
</feature>
<feature type="helix" evidence="2">
    <location>
        <begin position="67"/>
        <end position="77"/>
    </location>
</feature>
<feature type="helix" evidence="2">
    <location>
        <begin position="81"/>
        <end position="83"/>
    </location>
</feature>
<feature type="strand" evidence="2">
    <location>
        <begin position="84"/>
        <end position="89"/>
    </location>
</feature>
<feature type="helix" evidence="2">
    <location>
        <begin position="90"/>
        <end position="101"/>
    </location>
</feature>
<feature type="strand" evidence="2">
    <location>
        <begin position="107"/>
        <end position="114"/>
    </location>
</feature>
<feature type="helix" evidence="2">
    <location>
        <begin position="117"/>
        <end position="125"/>
    </location>
</feature>
<feature type="strand" evidence="2">
    <location>
        <begin position="128"/>
        <end position="133"/>
    </location>
</feature>
<feature type="helix" evidence="2">
    <location>
        <begin position="142"/>
        <end position="148"/>
    </location>
</feature>
<feature type="strand" evidence="2">
    <location>
        <begin position="153"/>
        <end position="161"/>
    </location>
</feature>
<feature type="turn" evidence="2">
    <location>
        <begin position="163"/>
        <end position="165"/>
    </location>
</feature>
<feature type="helix" evidence="2">
    <location>
        <begin position="171"/>
        <end position="178"/>
    </location>
</feature>
<feature type="strand" evidence="2">
    <location>
        <begin position="185"/>
        <end position="190"/>
    </location>
</feature>
<feature type="helix" evidence="2">
    <location>
        <begin position="194"/>
        <end position="196"/>
    </location>
</feature>
<feature type="helix" evidence="2">
    <location>
        <begin position="205"/>
        <end position="209"/>
    </location>
</feature>
<feature type="strand" evidence="2">
    <location>
        <begin position="214"/>
        <end position="222"/>
    </location>
</feature>
<feature type="strand" evidence="2">
    <location>
        <begin position="232"/>
        <end position="236"/>
    </location>
</feature>
<feature type="helix" evidence="2">
    <location>
        <begin position="238"/>
        <end position="246"/>
    </location>
</feature>
<feature type="helix" evidence="2">
    <location>
        <begin position="255"/>
        <end position="266"/>
    </location>
</feature>
<feature type="helix" evidence="2">
    <location>
        <begin position="268"/>
        <end position="291"/>
    </location>
</feature>
<feature type="strand" evidence="2">
    <location>
        <begin position="302"/>
        <end position="308"/>
    </location>
</feature>
<feature type="helix" evidence="2">
    <location>
        <begin position="313"/>
        <end position="322"/>
    </location>
</feature>
<feature type="turn" evidence="2">
    <location>
        <begin position="330"/>
        <end position="334"/>
    </location>
</feature>
<feature type="strand" evidence="2">
    <location>
        <begin position="338"/>
        <end position="342"/>
    </location>
</feature>
<feature type="helix" evidence="2">
    <location>
        <begin position="346"/>
        <end position="359"/>
    </location>
</feature>
<protein>
    <recommendedName>
        <fullName evidence="1">Histidinol-phosphate aminotransferase</fullName>
        <ecNumber evidence="1">2.6.1.9</ecNumber>
    </recommendedName>
    <alternativeName>
        <fullName evidence="1">Imidazole acetol-phosphate transaminase</fullName>
    </alternativeName>
</protein>
<organism>
    <name type="scientific">Listeria innocua serovar 6a (strain ATCC BAA-680 / CLIP 11262)</name>
    <dbReference type="NCBI Taxonomy" id="272626"/>
    <lineage>
        <taxon>Bacteria</taxon>
        <taxon>Bacillati</taxon>
        <taxon>Bacillota</taxon>
        <taxon>Bacilli</taxon>
        <taxon>Bacillales</taxon>
        <taxon>Listeriaceae</taxon>
        <taxon>Listeria</taxon>
    </lineage>
</organism>
<accession>Q92A83</accession>
<keyword id="KW-0002">3D-structure</keyword>
<keyword id="KW-0028">Amino-acid biosynthesis</keyword>
<keyword id="KW-0032">Aminotransferase</keyword>
<keyword id="KW-0368">Histidine biosynthesis</keyword>
<keyword id="KW-0663">Pyridoxal phosphate</keyword>
<keyword id="KW-0808">Transferase</keyword>
<comment type="catalytic activity">
    <reaction evidence="1">
        <text>L-histidinol phosphate + 2-oxoglutarate = 3-(imidazol-4-yl)-2-oxopropyl phosphate + L-glutamate</text>
        <dbReference type="Rhea" id="RHEA:23744"/>
        <dbReference type="ChEBI" id="CHEBI:16810"/>
        <dbReference type="ChEBI" id="CHEBI:29985"/>
        <dbReference type="ChEBI" id="CHEBI:57766"/>
        <dbReference type="ChEBI" id="CHEBI:57980"/>
        <dbReference type="EC" id="2.6.1.9"/>
    </reaction>
</comment>
<comment type="cofactor">
    <cofactor evidence="1">
        <name>pyridoxal 5'-phosphate</name>
        <dbReference type="ChEBI" id="CHEBI:597326"/>
    </cofactor>
</comment>
<comment type="pathway">
    <text evidence="1">Amino-acid biosynthesis; L-histidine biosynthesis; L-histidine from 5-phospho-alpha-D-ribose 1-diphosphate: step 7/9.</text>
</comment>
<comment type="subunit">
    <text evidence="1">Homodimer.</text>
</comment>
<comment type="similarity">
    <text evidence="1">Belongs to the class-II pyridoxal-phosphate-dependent aminotransferase family. Histidinol-phosphate aminotransferase subfamily.</text>
</comment>
<gene>
    <name evidence="1" type="primary">hisC</name>
    <name type="ordered locus">lin2039</name>
</gene>
<sequence length="360" mass="40063">MKWKKSLAGLSSYKPGKREEEVMAELGLTKITKLSSNENPLGTSKKVAAIQANSSVETEIYPDGWASSLRKEVADFYQLEEEELIFTAGVDELIELLTRVLLDTTTNTVMATPTFVQYRQNALIEGAEVREIPLLQDGEHDLEGMLNAIDEKTTIVWICNPNNPTGNYIELADIQAFLDRVPSDVLVVLDEAYIEYVTPQPEKHEKLVRTYKNLIITRTFSKIYGLASARVGYGIADKEIIRQLNIVRPPFNTTSIGQKLAIEAIKDQAFIGECRTSNANGIKQYEAFAKRFEKVKLYPANGNFVLIDLGIEAGTIFSYLEKNGYITRSGAALGFPTAVRITIGKEEDNSAVIALLEKLL</sequence>
<proteinExistence type="evidence at protein level"/>